<protein>
    <recommendedName>
        <fullName>Uncharacterized protein aq_465</fullName>
    </recommendedName>
</protein>
<name>Y465_AQUAE</name>
<dbReference type="EMBL" id="AE000657">
    <property type="protein sequence ID" value="AAC06729.1"/>
    <property type="molecule type" value="Genomic_DNA"/>
</dbReference>
<dbReference type="PIR" id="C70342">
    <property type="entry name" value="C70342"/>
</dbReference>
<dbReference type="RefSeq" id="NP_213327.1">
    <property type="nucleotide sequence ID" value="NC_000918.1"/>
</dbReference>
<dbReference type="RefSeq" id="WP_010880265.1">
    <property type="nucleotide sequence ID" value="NC_000918.1"/>
</dbReference>
<dbReference type="STRING" id="224324.aq_465"/>
<dbReference type="EnsemblBacteria" id="AAC06729">
    <property type="protein sequence ID" value="AAC06729"/>
    <property type="gene ID" value="aq_465"/>
</dbReference>
<dbReference type="KEGG" id="aae:aq_465"/>
<dbReference type="HOGENOM" id="CLU_2128276_0_0_0"/>
<dbReference type="InParanoid" id="O66767"/>
<dbReference type="Proteomes" id="UP000000798">
    <property type="component" value="Chromosome"/>
</dbReference>
<dbReference type="GO" id="GO:0016020">
    <property type="term" value="C:membrane"/>
    <property type="evidence" value="ECO:0007669"/>
    <property type="project" value="UniProtKB-SubCell"/>
</dbReference>
<sequence>MNRQPMFFILIVLLFTVFSLKEFIPNTFCIHPKEGIIHLEKEHPKTFCEKDEVHVKVLSEIKNLKVQLDLDKSFSFTSPFRISLSFVVLKKQNALPEKSPRRESPIKTVRLLI</sequence>
<keyword id="KW-0472">Membrane</keyword>
<keyword id="KW-1185">Reference proteome</keyword>
<keyword id="KW-0812">Transmembrane</keyword>
<keyword id="KW-1133">Transmembrane helix</keyword>
<evidence type="ECO:0000255" key="1"/>
<evidence type="ECO:0000305" key="2"/>
<reference key="1">
    <citation type="journal article" date="1998" name="Nature">
        <title>The complete genome of the hyperthermophilic bacterium Aquifex aeolicus.</title>
        <authorList>
            <person name="Deckert G."/>
            <person name="Warren P.V."/>
            <person name="Gaasterland T."/>
            <person name="Young W.G."/>
            <person name="Lenox A.L."/>
            <person name="Graham D.E."/>
            <person name="Overbeek R."/>
            <person name="Snead M.A."/>
            <person name="Keller M."/>
            <person name="Aujay M."/>
            <person name="Huber R."/>
            <person name="Feldman R.A."/>
            <person name="Short J.M."/>
            <person name="Olsen G.J."/>
            <person name="Swanson R.V."/>
        </authorList>
    </citation>
    <scope>NUCLEOTIDE SEQUENCE [LARGE SCALE GENOMIC DNA]</scope>
    <source>
        <strain>VF5</strain>
    </source>
</reference>
<comment type="subcellular location">
    <subcellularLocation>
        <location evidence="2">Membrane</location>
        <topology evidence="2">Single-pass membrane protein</topology>
    </subcellularLocation>
</comment>
<feature type="chain" id="PRO_0000186863" description="Uncharacterized protein aq_465">
    <location>
        <begin position="1"/>
        <end position="113"/>
    </location>
</feature>
<feature type="transmembrane region" description="Helical" evidence="1">
    <location>
        <begin position="7"/>
        <end position="29"/>
    </location>
</feature>
<proteinExistence type="predicted"/>
<organism>
    <name type="scientific">Aquifex aeolicus (strain VF5)</name>
    <dbReference type="NCBI Taxonomy" id="224324"/>
    <lineage>
        <taxon>Bacteria</taxon>
        <taxon>Pseudomonadati</taxon>
        <taxon>Aquificota</taxon>
        <taxon>Aquificia</taxon>
        <taxon>Aquificales</taxon>
        <taxon>Aquificaceae</taxon>
        <taxon>Aquifex</taxon>
    </lineage>
</organism>
<gene>
    <name type="ordered locus">aq_465</name>
</gene>
<accession>O66767</accession>